<feature type="chain" id="PRO_0000234538" description="Sulfurtransferase TusD">
    <location>
        <begin position="1"/>
        <end position="130"/>
    </location>
</feature>
<feature type="active site" description="Cysteine persulfide intermediate" evidence="1">
    <location>
        <position position="80"/>
    </location>
</feature>
<accession>Q2NQL1</accession>
<sequence length="130" mass="14027">MSLDYCLMVTGPAYGNQRASSALQFARALLECGHRLGTVFFYQDGVHNANRLSAPAGDEVDLVRAWHELAQQHQVALHVCAAAALRRGVTDALQASLLKRSGENLQPGFELSGLGSLVQAALGCDRFIQF</sequence>
<evidence type="ECO:0000255" key="1">
    <source>
        <dbReference type="HAMAP-Rule" id="MF_00390"/>
    </source>
</evidence>
<protein>
    <recommendedName>
        <fullName evidence="1">Sulfurtransferase TusD</fullName>
        <ecNumber evidence="1">2.8.1.-</ecNumber>
    </recommendedName>
    <alternativeName>
        <fullName evidence="1">tRNA 2-thiouridine synthesizing protein D</fullName>
    </alternativeName>
</protein>
<name>TUSD_SODGM</name>
<gene>
    <name evidence="1" type="primary">tusD</name>
    <name type="ordered locus">SG2289</name>
</gene>
<dbReference type="EC" id="2.8.1.-" evidence="1"/>
<dbReference type="EMBL" id="AP008232">
    <property type="protein sequence ID" value="BAE75564.1"/>
    <property type="molecule type" value="Genomic_DNA"/>
</dbReference>
<dbReference type="RefSeq" id="WP_011412097.1">
    <property type="nucleotide sequence ID" value="NC_007712.1"/>
</dbReference>
<dbReference type="SMR" id="Q2NQL1"/>
<dbReference type="STRING" id="343509.SG2289"/>
<dbReference type="KEGG" id="sgl:SG2289"/>
<dbReference type="eggNOG" id="COG1553">
    <property type="taxonomic scope" value="Bacteria"/>
</dbReference>
<dbReference type="HOGENOM" id="CLU_132095_0_0_6"/>
<dbReference type="OrthoDB" id="9787483at2"/>
<dbReference type="BioCyc" id="SGLO343509:SGP1_RS20900-MONOMER"/>
<dbReference type="Proteomes" id="UP000001932">
    <property type="component" value="Chromosome"/>
</dbReference>
<dbReference type="GO" id="GO:1990228">
    <property type="term" value="C:sulfurtransferase complex"/>
    <property type="evidence" value="ECO:0007669"/>
    <property type="project" value="TreeGrafter"/>
</dbReference>
<dbReference type="GO" id="GO:0097163">
    <property type="term" value="F:sulfur carrier activity"/>
    <property type="evidence" value="ECO:0007669"/>
    <property type="project" value="TreeGrafter"/>
</dbReference>
<dbReference type="GO" id="GO:0016783">
    <property type="term" value="F:sulfurtransferase activity"/>
    <property type="evidence" value="ECO:0007669"/>
    <property type="project" value="UniProtKB-UniRule"/>
</dbReference>
<dbReference type="GO" id="GO:0002143">
    <property type="term" value="P:tRNA wobble position uridine thiolation"/>
    <property type="evidence" value="ECO:0007669"/>
    <property type="project" value="TreeGrafter"/>
</dbReference>
<dbReference type="FunFam" id="3.40.1260.10:FF:000001">
    <property type="entry name" value="Sulfurtransferase TusD"/>
    <property type="match status" value="1"/>
</dbReference>
<dbReference type="Gene3D" id="3.40.1260.10">
    <property type="entry name" value="DsrEFH-like"/>
    <property type="match status" value="1"/>
</dbReference>
<dbReference type="HAMAP" id="MF_00390">
    <property type="entry name" value="Thiourid_synth_D"/>
    <property type="match status" value="1"/>
</dbReference>
<dbReference type="InterPro" id="IPR027396">
    <property type="entry name" value="DsrEFH-like"/>
</dbReference>
<dbReference type="InterPro" id="IPR003787">
    <property type="entry name" value="Sulphur_relay_DsrE/F-like"/>
</dbReference>
<dbReference type="InterPro" id="IPR017463">
    <property type="entry name" value="Sulphur_relay_TusD/DsrE"/>
</dbReference>
<dbReference type="NCBIfam" id="NF001237">
    <property type="entry name" value="PRK00207.1"/>
    <property type="match status" value="1"/>
</dbReference>
<dbReference type="NCBIfam" id="TIGR03012">
    <property type="entry name" value="sulf_tusD_dsrE"/>
    <property type="match status" value="1"/>
</dbReference>
<dbReference type="PANTHER" id="PTHR34874">
    <property type="entry name" value="PROTEIN YCHN"/>
    <property type="match status" value="1"/>
</dbReference>
<dbReference type="PANTHER" id="PTHR34874:SF3">
    <property type="entry name" value="SULFURTRANSFERASE TUSD"/>
    <property type="match status" value="1"/>
</dbReference>
<dbReference type="Pfam" id="PF02635">
    <property type="entry name" value="DsrE"/>
    <property type="match status" value="1"/>
</dbReference>
<dbReference type="SUPFAM" id="SSF75169">
    <property type="entry name" value="DsrEFH-like"/>
    <property type="match status" value="1"/>
</dbReference>
<reference key="1">
    <citation type="journal article" date="2006" name="Genome Res.">
        <title>Massive genome erosion and functional adaptations provide insights into the symbiotic lifestyle of Sodalis glossinidius in the tsetse host.</title>
        <authorList>
            <person name="Toh H."/>
            <person name="Weiss B.L."/>
            <person name="Perkin S.A.H."/>
            <person name="Yamashita A."/>
            <person name="Oshima K."/>
            <person name="Hattori M."/>
            <person name="Aksoy S."/>
        </authorList>
    </citation>
    <scope>NUCLEOTIDE SEQUENCE [LARGE SCALE GENOMIC DNA]</scope>
    <source>
        <strain>morsitans</strain>
    </source>
</reference>
<organism>
    <name type="scientific">Sodalis glossinidius (strain morsitans)</name>
    <dbReference type="NCBI Taxonomy" id="343509"/>
    <lineage>
        <taxon>Bacteria</taxon>
        <taxon>Pseudomonadati</taxon>
        <taxon>Pseudomonadota</taxon>
        <taxon>Gammaproteobacteria</taxon>
        <taxon>Enterobacterales</taxon>
        <taxon>Bruguierivoracaceae</taxon>
        <taxon>Sodalis</taxon>
    </lineage>
</organism>
<keyword id="KW-0963">Cytoplasm</keyword>
<keyword id="KW-0808">Transferase</keyword>
<keyword id="KW-0819">tRNA processing</keyword>
<proteinExistence type="inferred from homology"/>
<comment type="function">
    <text evidence="1">Part of a sulfur-relay system required for 2-thiolation of 5-methylaminomethyl-2-thiouridine (mnm(5)s(2)U) at tRNA wobble positions. Accepts sulfur from TusA and transfers it in turn to TusE.</text>
</comment>
<comment type="subunit">
    <text evidence="1">Heterohexamer, formed by a dimer of trimers. The hexameric TusBCD complex contains 2 copies each of TusB, TusC and TusD. The TusBCD complex interacts with TusE.</text>
</comment>
<comment type="subcellular location">
    <subcellularLocation>
        <location evidence="1">Cytoplasm</location>
    </subcellularLocation>
</comment>
<comment type="similarity">
    <text evidence="1">Belongs to the DsrE/TusD family.</text>
</comment>